<dbReference type="EMBL" id="CP000880">
    <property type="protein sequence ID" value="ABX23450.1"/>
    <property type="molecule type" value="Genomic_DNA"/>
</dbReference>
<dbReference type="STRING" id="41514.SARI_03639"/>
<dbReference type="KEGG" id="ses:SARI_03639"/>
<dbReference type="HOGENOM" id="CLU_032288_0_0_6"/>
<dbReference type="Proteomes" id="UP000002084">
    <property type="component" value="Chromosome"/>
</dbReference>
<dbReference type="GO" id="GO:0005886">
    <property type="term" value="C:plasma membrane"/>
    <property type="evidence" value="ECO:0007669"/>
    <property type="project" value="UniProtKB-SubCell"/>
</dbReference>
<dbReference type="HAMAP" id="MF_00672">
    <property type="entry name" value="UPF0761"/>
    <property type="match status" value="1"/>
</dbReference>
<dbReference type="InterPro" id="IPR023679">
    <property type="entry name" value="UPF0761_bac"/>
</dbReference>
<dbReference type="InterPro" id="IPR017039">
    <property type="entry name" value="Virul_fac_BrkB"/>
</dbReference>
<dbReference type="NCBIfam" id="NF002457">
    <property type="entry name" value="PRK01637.1"/>
    <property type="match status" value="1"/>
</dbReference>
<dbReference type="NCBIfam" id="TIGR00765">
    <property type="entry name" value="yihY_not_rbn"/>
    <property type="match status" value="1"/>
</dbReference>
<dbReference type="PANTHER" id="PTHR30213">
    <property type="entry name" value="INNER MEMBRANE PROTEIN YHJD"/>
    <property type="match status" value="1"/>
</dbReference>
<dbReference type="PANTHER" id="PTHR30213:SF0">
    <property type="entry name" value="UPF0761 MEMBRANE PROTEIN YIHY"/>
    <property type="match status" value="1"/>
</dbReference>
<dbReference type="Pfam" id="PF03631">
    <property type="entry name" value="Virul_fac_BrkB"/>
    <property type="match status" value="1"/>
</dbReference>
<dbReference type="PIRSF" id="PIRSF035875">
    <property type="entry name" value="RNase_BN"/>
    <property type="match status" value="1"/>
</dbReference>
<accession>A9MIA4</accession>
<organism>
    <name type="scientific">Salmonella arizonae (strain ATCC BAA-731 / CDC346-86 / RSK2980)</name>
    <dbReference type="NCBI Taxonomy" id="41514"/>
    <lineage>
        <taxon>Bacteria</taxon>
        <taxon>Pseudomonadati</taxon>
        <taxon>Pseudomonadota</taxon>
        <taxon>Gammaproteobacteria</taxon>
        <taxon>Enterobacterales</taxon>
        <taxon>Enterobacteriaceae</taxon>
        <taxon>Salmonella</taxon>
    </lineage>
</organism>
<comment type="subcellular location">
    <subcellularLocation>
        <location evidence="1">Cell inner membrane</location>
        <topology evidence="1">Multi-pass membrane protein</topology>
    </subcellularLocation>
</comment>
<comment type="similarity">
    <text evidence="1">Belongs to the UPF0761 family.</text>
</comment>
<evidence type="ECO:0000255" key="1">
    <source>
        <dbReference type="HAMAP-Rule" id="MF_00672"/>
    </source>
</evidence>
<proteinExistence type="inferred from homology"/>
<protein>
    <recommendedName>
        <fullName evidence="1">UPF0761 membrane protein YihY</fullName>
    </recommendedName>
</protein>
<keyword id="KW-0997">Cell inner membrane</keyword>
<keyword id="KW-1003">Cell membrane</keyword>
<keyword id="KW-0472">Membrane</keyword>
<keyword id="KW-1185">Reference proteome</keyword>
<keyword id="KW-0812">Transmembrane</keyword>
<keyword id="KW-1133">Transmembrane helix</keyword>
<sequence>MLKTVHQKAGRHTRPVRAWLKLLWQRIDEDNMTTLAGNLAYVSLLSLVPLIAVVFALFAAFPMFSDVSIQLRHFIFANFMPATGDVIQRYIEQFVANSNKMTAVGACGLIVTALLLMYAIDSALNTIWRSKRTRPKVYSFAVYWMILTLGPLLAGASLAISSYLLSLRWASDLNTVIDNVLRVLPLLLSWISFWLLYSIVPTTRVPNRDAIVGAFVAALLFEAGKKGFALYITMFPSYQLIYGVLAVIPILFVWVYWTWCIVLLGAEITVTLGEYRKLKQAAEQEEADQP</sequence>
<name>YIHY_SALAR</name>
<gene>
    <name evidence="1" type="primary">yihY</name>
    <name type="ordered locus">SARI_03639</name>
</gene>
<reference key="1">
    <citation type="submission" date="2007-11" db="EMBL/GenBank/DDBJ databases">
        <authorList>
            <consortium name="The Salmonella enterica serovar Arizonae Genome Sequencing Project"/>
            <person name="McClelland M."/>
            <person name="Sanderson E.K."/>
            <person name="Porwollik S."/>
            <person name="Spieth J."/>
            <person name="Clifton W.S."/>
            <person name="Fulton R."/>
            <person name="Chunyan W."/>
            <person name="Wollam A."/>
            <person name="Shah N."/>
            <person name="Pepin K."/>
            <person name="Bhonagiri V."/>
            <person name="Nash W."/>
            <person name="Johnson M."/>
            <person name="Thiruvilangam P."/>
            <person name="Wilson R."/>
        </authorList>
    </citation>
    <scope>NUCLEOTIDE SEQUENCE [LARGE SCALE GENOMIC DNA]</scope>
    <source>
        <strain>ATCC BAA-731 / CDC346-86 / RSK2980</strain>
    </source>
</reference>
<feature type="chain" id="PRO_1000082948" description="UPF0761 membrane protein YihY">
    <location>
        <begin position="1"/>
        <end position="290"/>
    </location>
</feature>
<feature type="transmembrane region" description="Helical" evidence="1">
    <location>
        <begin position="44"/>
        <end position="64"/>
    </location>
</feature>
<feature type="transmembrane region" description="Helical" evidence="1">
    <location>
        <begin position="104"/>
        <end position="124"/>
    </location>
</feature>
<feature type="transmembrane region" description="Helical" evidence="1">
    <location>
        <begin position="140"/>
        <end position="160"/>
    </location>
</feature>
<feature type="transmembrane region" description="Helical" evidence="1">
    <location>
        <begin position="183"/>
        <end position="203"/>
    </location>
</feature>
<feature type="transmembrane region" description="Helical" evidence="1">
    <location>
        <begin position="210"/>
        <end position="230"/>
    </location>
</feature>
<feature type="transmembrane region" description="Helical" evidence="1">
    <location>
        <begin position="244"/>
        <end position="264"/>
    </location>
</feature>